<name>VOA1_SCHPO</name>
<reference key="1">
    <citation type="journal article" date="2002" name="Nature">
        <title>The genome sequence of Schizosaccharomyces pombe.</title>
        <authorList>
            <person name="Wood V."/>
            <person name="Gwilliam R."/>
            <person name="Rajandream M.A."/>
            <person name="Lyne M.H."/>
            <person name="Lyne R."/>
            <person name="Stewart A."/>
            <person name="Sgouros J.G."/>
            <person name="Peat N."/>
            <person name="Hayles J."/>
            <person name="Baker S.G."/>
            <person name="Basham D."/>
            <person name="Bowman S."/>
            <person name="Brooks K."/>
            <person name="Brown D."/>
            <person name="Brown S."/>
            <person name="Chillingworth T."/>
            <person name="Churcher C.M."/>
            <person name="Collins M."/>
            <person name="Connor R."/>
            <person name="Cronin A."/>
            <person name="Davis P."/>
            <person name="Feltwell T."/>
            <person name="Fraser A."/>
            <person name="Gentles S."/>
            <person name="Goble A."/>
            <person name="Hamlin N."/>
            <person name="Harris D.E."/>
            <person name="Hidalgo J."/>
            <person name="Hodgson G."/>
            <person name="Holroyd S."/>
            <person name="Hornsby T."/>
            <person name="Howarth S."/>
            <person name="Huckle E.J."/>
            <person name="Hunt S."/>
            <person name="Jagels K."/>
            <person name="James K.D."/>
            <person name="Jones L."/>
            <person name="Jones M."/>
            <person name="Leather S."/>
            <person name="McDonald S."/>
            <person name="McLean J."/>
            <person name="Mooney P."/>
            <person name="Moule S."/>
            <person name="Mungall K.L."/>
            <person name="Murphy L.D."/>
            <person name="Niblett D."/>
            <person name="Odell C."/>
            <person name="Oliver K."/>
            <person name="O'Neil S."/>
            <person name="Pearson D."/>
            <person name="Quail M.A."/>
            <person name="Rabbinowitsch E."/>
            <person name="Rutherford K.M."/>
            <person name="Rutter S."/>
            <person name="Saunders D."/>
            <person name="Seeger K."/>
            <person name="Sharp S."/>
            <person name="Skelton J."/>
            <person name="Simmonds M.N."/>
            <person name="Squares R."/>
            <person name="Squares S."/>
            <person name="Stevens K."/>
            <person name="Taylor K."/>
            <person name="Taylor R.G."/>
            <person name="Tivey A."/>
            <person name="Walsh S.V."/>
            <person name="Warren T."/>
            <person name="Whitehead S."/>
            <person name="Woodward J.R."/>
            <person name="Volckaert G."/>
            <person name="Aert R."/>
            <person name="Robben J."/>
            <person name="Grymonprez B."/>
            <person name="Weltjens I."/>
            <person name="Vanstreels E."/>
            <person name="Rieger M."/>
            <person name="Schaefer M."/>
            <person name="Mueller-Auer S."/>
            <person name="Gabel C."/>
            <person name="Fuchs M."/>
            <person name="Duesterhoeft A."/>
            <person name="Fritzc C."/>
            <person name="Holzer E."/>
            <person name="Moestl D."/>
            <person name="Hilbert H."/>
            <person name="Borzym K."/>
            <person name="Langer I."/>
            <person name="Beck A."/>
            <person name="Lehrach H."/>
            <person name="Reinhardt R."/>
            <person name="Pohl T.M."/>
            <person name="Eger P."/>
            <person name="Zimmermann W."/>
            <person name="Wedler H."/>
            <person name="Wambutt R."/>
            <person name="Purnelle B."/>
            <person name="Goffeau A."/>
            <person name="Cadieu E."/>
            <person name="Dreano S."/>
            <person name="Gloux S."/>
            <person name="Lelaure V."/>
            <person name="Mottier S."/>
            <person name="Galibert F."/>
            <person name="Aves S.J."/>
            <person name="Xiang Z."/>
            <person name="Hunt C."/>
            <person name="Moore K."/>
            <person name="Hurst S.M."/>
            <person name="Lucas M."/>
            <person name="Rochet M."/>
            <person name="Gaillardin C."/>
            <person name="Tallada V.A."/>
            <person name="Garzon A."/>
            <person name="Thode G."/>
            <person name="Daga R.R."/>
            <person name="Cruzado L."/>
            <person name="Jimenez J."/>
            <person name="Sanchez M."/>
            <person name="del Rey F."/>
            <person name="Benito J."/>
            <person name="Dominguez A."/>
            <person name="Revuelta J.L."/>
            <person name="Moreno S."/>
            <person name="Armstrong J."/>
            <person name="Forsburg S.L."/>
            <person name="Cerutti L."/>
            <person name="Lowe T."/>
            <person name="McCombie W.R."/>
            <person name="Paulsen I."/>
            <person name="Potashkin J."/>
            <person name="Shpakovski G.V."/>
            <person name="Ussery D."/>
            <person name="Barrell B.G."/>
            <person name="Nurse P."/>
        </authorList>
    </citation>
    <scope>NUCLEOTIDE SEQUENCE [LARGE SCALE GENOMIC DNA]</scope>
    <source>
        <strain>972 / ATCC 24843</strain>
    </source>
</reference>
<reference key="2">
    <citation type="journal article" date="2006" name="Nat. Biotechnol.">
        <title>ORFeome cloning and global analysis of protein localization in the fission yeast Schizosaccharomyces pombe.</title>
        <authorList>
            <person name="Matsuyama A."/>
            <person name="Arai R."/>
            <person name="Yashiroda Y."/>
            <person name="Shirai A."/>
            <person name="Kamata A."/>
            <person name="Sekido S."/>
            <person name="Kobayashi Y."/>
            <person name="Hashimoto A."/>
            <person name="Hamamoto M."/>
            <person name="Hiraoka Y."/>
            <person name="Horinouchi S."/>
            <person name="Yoshida M."/>
        </authorList>
    </citation>
    <scope>SUBCELLULAR LOCATION [LARGE SCALE ANALYSIS]</scope>
</reference>
<comment type="function">
    <text evidence="1">Accessory subunit of the V0 complex of vacuolar(H+)-ATPase (V-ATPase), a multisubunit enzyme composed of a peripheral complex (V1) that hydrolyzes ATP and a membrane integral complex (V0) that translocates protons (By similarity). V-ATPase is responsible for acidifying and maintaining the pH of intracellular compartments (By similarity).</text>
</comment>
<comment type="subunit">
    <text evidence="1">V-ATPase is a heteromultimeric enzyme composed of a peripheral catalytic V1 complex (components A to H) attached to an integral membrane V0 proton pore complex (components: a, c, c', c'', d, e, f and VOA1).</text>
</comment>
<comment type="subcellular location">
    <subcellularLocation>
        <location evidence="3">Endoplasmic reticulum membrane</location>
        <topology evidence="3">Single-pass type I membrane protein</topology>
    </subcellularLocation>
    <subcellularLocation>
        <location evidence="3">Vacuole membrane</location>
        <topology evidence="3">Single-pass type I membrane protein</topology>
    </subcellularLocation>
</comment>
<comment type="similarity">
    <text evidence="4">Belongs to the BIG1 family.</text>
</comment>
<proteinExistence type="inferred from homology"/>
<sequence length="311" mass="34636">MFSWSILFIVCFSLVSAFKDTSPIFLFSTNSKLPKSSDDSSISTCPMMFFDAAIEALSTCNTATLIIHQPGLEVNDFQLGAFKHLKRVSLQSPYSLLLPYSKESLDSQELVHSAKQNCDVEVVYLGGSFNAFPPLQNDRITVVYMNELSNESYHRSAQLMELDEMFYNLQSTLEQDAQWNVIIASSPLNNSDFEGFKVDANEEEANAEFVIQTLGGLNSGKSALQHGQLASLPDQNEGSQTTLAMHQTRKHPVTDNGATGLFTEYQFFTPGLYMGYLALAVLVPTLFISCRLLSSIQISYHAFDSPRRKQL</sequence>
<organism>
    <name type="scientific">Schizosaccharomyces pombe (strain 972 / ATCC 24843)</name>
    <name type="common">Fission yeast</name>
    <dbReference type="NCBI Taxonomy" id="284812"/>
    <lineage>
        <taxon>Eukaryota</taxon>
        <taxon>Fungi</taxon>
        <taxon>Dikarya</taxon>
        <taxon>Ascomycota</taxon>
        <taxon>Taphrinomycotina</taxon>
        <taxon>Schizosaccharomycetes</taxon>
        <taxon>Schizosaccharomycetales</taxon>
        <taxon>Schizosaccharomycetaceae</taxon>
        <taxon>Schizosaccharomyces</taxon>
    </lineage>
</organism>
<dbReference type="EMBL" id="CU329672">
    <property type="protein sequence ID" value="CAB41654.1"/>
    <property type="molecule type" value="Genomic_DNA"/>
</dbReference>
<dbReference type="PIR" id="T41284">
    <property type="entry name" value="T41284"/>
</dbReference>
<dbReference type="RefSeq" id="NP_587814.1">
    <property type="nucleotide sequence ID" value="NM_001022807.2"/>
</dbReference>
<dbReference type="STRING" id="284812.Q9Y7R6"/>
<dbReference type="GlyCosmos" id="Q9Y7R6">
    <property type="glycosylation" value="2 sites, No reported glycans"/>
</dbReference>
<dbReference type="iPTMnet" id="Q9Y7R6"/>
<dbReference type="PaxDb" id="4896-SPCC306.06c.1"/>
<dbReference type="EnsemblFungi" id="SPCC306.06c.1">
    <property type="protein sequence ID" value="SPCC306.06c.1:pep"/>
    <property type="gene ID" value="SPCC306.06c"/>
</dbReference>
<dbReference type="GeneID" id="2539326"/>
<dbReference type="KEGG" id="spo:2539326"/>
<dbReference type="PomBase" id="SPCC306.06c">
    <property type="gene designation" value="big1"/>
</dbReference>
<dbReference type="VEuPathDB" id="FungiDB:SPCC306.06c"/>
<dbReference type="eggNOG" id="ENOG502S6TD">
    <property type="taxonomic scope" value="Eukaryota"/>
</dbReference>
<dbReference type="HOGENOM" id="CLU_980576_0_0_1"/>
<dbReference type="InParanoid" id="Q9Y7R6"/>
<dbReference type="OMA" id="QISYHAF"/>
<dbReference type="PhylomeDB" id="Q9Y7R6"/>
<dbReference type="PRO" id="PR:Q9Y7R6"/>
<dbReference type="Proteomes" id="UP000002485">
    <property type="component" value="Chromosome III"/>
</dbReference>
<dbReference type="GO" id="GO:0005783">
    <property type="term" value="C:endoplasmic reticulum"/>
    <property type="evidence" value="ECO:0007005"/>
    <property type="project" value="PomBase"/>
</dbReference>
<dbReference type="GO" id="GO:0005789">
    <property type="term" value="C:endoplasmic reticulum membrane"/>
    <property type="evidence" value="ECO:0000266"/>
    <property type="project" value="PomBase"/>
</dbReference>
<dbReference type="GO" id="GO:0000329">
    <property type="term" value="C:fungal-type vacuole membrane"/>
    <property type="evidence" value="ECO:0007005"/>
    <property type="project" value="PomBase"/>
</dbReference>
<dbReference type="GO" id="GO:0071555">
    <property type="term" value="P:cell wall organization"/>
    <property type="evidence" value="ECO:0007669"/>
    <property type="project" value="UniProtKB-KW"/>
</dbReference>
<dbReference type="GO" id="GO:0070072">
    <property type="term" value="P:vacuolar proton-transporting V-type ATPase complex assembly"/>
    <property type="evidence" value="ECO:0000266"/>
    <property type="project" value="PomBase"/>
</dbReference>
<dbReference type="InterPro" id="IPR037654">
    <property type="entry name" value="Big1"/>
</dbReference>
<dbReference type="InterPro" id="IPR046756">
    <property type="entry name" value="VAS1/VOA1_TM"/>
</dbReference>
<dbReference type="PANTHER" id="PTHR28285">
    <property type="entry name" value="PROTEIN BIG1"/>
    <property type="match status" value="1"/>
</dbReference>
<dbReference type="PANTHER" id="PTHR28285:SF1">
    <property type="entry name" value="PROTEIN BIG1"/>
    <property type="match status" value="1"/>
</dbReference>
<dbReference type="Pfam" id="PF20520">
    <property type="entry name" value="Ac45-VOA1_TM"/>
    <property type="match status" value="1"/>
</dbReference>
<evidence type="ECO:0000250" key="1">
    <source>
        <dbReference type="UniProtKB" id="P53262"/>
    </source>
</evidence>
<evidence type="ECO:0000255" key="2"/>
<evidence type="ECO:0000269" key="3">
    <source>
    </source>
</evidence>
<evidence type="ECO:0000305" key="4"/>
<feature type="signal peptide" evidence="2">
    <location>
        <begin position="1"/>
        <end position="17"/>
    </location>
</feature>
<feature type="chain" id="PRO_0000343134" description="Protein big1">
    <location>
        <begin position="18"/>
        <end position="311"/>
    </location>
</feature>
<feature type="topological domain" description="Lumenal" evidence="2">
    <location>
        <begin position="18"/>
        <end position="267"/>
    </location>
</feature>
<feature type="transmembrane region" description="Helical" evidence="2">
    <location>
        <begin position="268"/>
        <end position="288"/>
    </location>
</feature>
<feature type="topological domain" description="Cytoplasmic" evidence="2">
    <location>
        <begin position="289"/>
        <end position="311"/>
    </location>
</feature>
<feature type="glycosylation site" description="N-linked (GlcNAc...) asparagine" evidence="2">
    <location>
        <position position="150"/>
    </location>
</feature>
<feature type="glycosylation site" description="N-linked (GlcNAc...) asparagine" evidence="2">
    <location>
        <position position="189"/>
    </location>
</feature>
<accession>Q9Y7R6</accession>
<keyword id="KW-0961">Cell wall biogenesis/degradation</keyword>
<keyword id="KW-0256">Endoplasmic reticulum</keyword>
<keyword id="KW-0325">Glycoprotein</keyword>
<keyword id="KW-0472">Membrane</keyword>
<keyword id="KW-1185">Reference proteome</keyword>
<keyword id="KW-0732">Signal</keyword>
<keyword id="KW-0812">Transmembrane</keyword>
<keyword id="KW-1133">Transmembrane helix</keyword>
<keyword id="KW-0926">Vacuole</keyword>
<protein>
    <recommendedName>
        <fullName>Protein big1</fullName>
    </recommendedName>
</protein>
<gene>
    <name type="primary">big1</name>
    <name type="synonym">voa1</name>
    <name type="ORF">SPCC306.06c</name>
</gene>